<name>ATPA_PIPCE</name>
<reference key="1">
    <citation type="journal article" date="2006" name="BMC Evol. Biol.">
        <title>Complete plastid genome sequences of Drimys, Liriodendron, and Piper: implications for the phylogenetic relationships of magnoliids.</title>
        <authorList>
            <person name="Cai Z."/>
            <person name="Penaflor C."/>
            <person name="Kuehl J.V."/>
            <person name="Leebens-Mack J."/>
            <person name="Carlson J.E."/>
            <person name="dePamphilis C.W."/>
            <person name="Boore J.L."/>
            <person name="Jansen R.K."/>
        </authorList>
    </citation>
    <scope>NUCLEOTIDE SEQUENCE [LARGE SCALE GENOMIC DNA]</scope>
</reference>
<organism>
    <name type="scientific">Piper cenocladum</name>
    <name type="common">Ant piper</name>
    <dbReference type="NCBI Taxonomy" id="398741"/>
    <lineage>
        <taxon>Eukaryota</taxon>
        <taxon>Viridiplantae</taxon>
        <taxon>Streptophyta</taxon>
        <taxon>Embryophyta</taxon>
        <taxon>Tracheophyta</taxon>
        <taxon>Spermatophyta</taxon>
        <taxon>Magnoliopsida</taxon>
        <taxon>Magnoliidae</taxon>
        <taxon>Piperales</taxon>
        <taxon>Piperaceae</taxon>
        <taxon>Piper</taxon>
    </lineage>
</organism>
<evidence type="ECO:0000255" key="1">
    <source>
        <dbReference type="HAMAP-Rule" id="MF_01346"/>
    </source>
</evidence>
<sequence>METLRADEISNIIRERIEQYNREVNIVNTGTVLQVGDGIARIHGLDEVMAGELVEFDEGTIGIALNLESNNVGVVLMGDGLMIQEGSSVKATGRIAQIPVSEAYLGRVINALAKPIDGRGEISASESRLIESPAPGIISRRSVYEPLQTGLIAIDSMIPIGRGQRELIIGDRQTGKTAVATDTILNQKGQNVICVYVAIGQKASSVAQVVTTFQEQGAMEYTIVVAETADSPATLQYLAPYTGAALAEYFMYREQHTSIIYDDPSKQAQAYRQMSLLLRRPPGREAYPGDVFYLHSRLLERAAKLNSSLGEGSMTALPIVETQSGDVSAYIPTNVISITDGQIFLSSDLFNAGIRPAINVGISVSRVGSAAQIKAMKQVAGKLKLELAQFAELEAFAQFASDLDKATQNQLARGQRLRELLKQSQSAPLAVEEQIVTIYTGANGYLDPLETGQVKKFLVQLRTYLKTNKPQFQEIISSTKIFTKDAEAILKEVIPEQIELFLLQEQT</sequence>
<protein>
    <recommendedName>
        <fullName evidence="1">ATP synthase subunit alpha, chloroplastic</fullName>
        <ecNumber evidence="1">7.1.2.2</ecNumber>
    </recommendedName>
    <alternativeName>
        <fullName evidence="1">ATP synthase F1 sector subunit alpha</fullName>
    </alternativeName>
    <alternativeName>
        <fullName evidence="1">F-ATPase subunit alpha</fullName>
    </alternativeName>
</protein>
<comment type="function">
    <text evidence="1">Produces ATP from ADP in the presence of a proton gradient across the membrane. The alpha chain is a regulatory subunit.</text>
</comment>
<comment type="catalytic activity">
    <reaction evidence="1">
        <text>ATP + H2O + 4 H(+)(in) = ADP + phosphate + 5 H(+)(out)</text>
        <dbReference type="Rhea" id="RHEA:57720"/>
        <dbReference type="ChEBI" id="CHEBI:15377"/>
        <dbReference type="ChEBI" id="CHEBI:15378"/>
        <dbReference type="ChEBI" id="CHEBI:30616"/>
        <dbReference type="ChEBI" id="CHEBI:43474"/>
        <dbReference type="ChEBI" id="CHEBI:456216"/>
        <dbReference type="EC" id="7.1.2.2"/>
    </reaction>
</comment>
<comment type="subunit">
    <text evidence="1">F-type ATPases have 2 components, CF(1) - the catalytic core - and CF(0) - the membrane proton channel. CF(1) has five subunits: alpha(3), beta(3), gamma(1), delta(1), epsilon(1). CF(0) has four main subunits: a, b, b' and c.</text>
</comment>
<comment type="subcellular location">
    <subcellularLocation>
        <location evidence="1">Plastid</location>
        <location evidence="1">Chloroplast thylakoid membrane</location>
        <topology evidence="1">Peripheral membrane protein</topology>
    </subcellularLocation>
</comment>
<comment type="similarity">
    <text evidence="1">Belongs to the ATPase alpha/beta chains family.</text>
</comment>
<geneLocation type="chloroplast"/>
<proteinExistence type="inferred from homology"/>
<dbReference type="EC" id="7.1.2.2" evidence="1"/>
<dbReference type="EMBL" id="DQ887677">
    <property type="protein sequence ID" value="ABI14457.1"/>
    <property type="molecule type" value="Genomic_DNA"/>
</dbReference>
<dbReference type="RefSeq" id="YP_784458.1">
    <property type="nucleotide sequence ID" value="NC_008457.1"/>
</dbReference>
<dbReference type="SMR" id="Q06GS5"/>
<dbReference type="GeneID" id="4363770"/>
<dbReference type="GO" id="GO:0009535">
    <property type="term" value="C:chloroplast thylakoid membrane"/>
    <property type="evidence" value="ECO:0007669"/>
    <property type="project" value="UniProtKB-SubCell"/>
</dbReference>
<dbReference type="GO" id="GO:0045259">
    <property type="term" value="C:proton-transporting ATP synthase complex"/>
    <property type="evidence" value="ECO:0007669"/>
    <property type="project" value="UniProtKB-KW"/>
</dbReference>
<dbReference type="GO" id="GO:0043531">
    <property type="term" value="F:ADP binding"/>
    <property type="evidence" value="ECO:0007669"/>
    <property type="project" value="TreeGrafter"/>
</dbReference>
<dbReference type="GO" id="GO:0005524">
    <property type="term" value="F:ATP binding"/>
    <property type="evidence" value="ECO:0007669"/>
    <property type="project" value="UniProtKB-UniRule"/>
</dbReference>
<dbReference type="GO" id="GO:0046933">
    <property type="term" value="F:proton-transporting ATP synthase activity, rotational mechanism"/>
    <property type="evidence" value="ECO:0007669"/>
    <property type="project" value="UniProtKB-UniRule"/>
</dbReference>
<dbReference type="CDD" id="cd18113">
    <property type="entry name" value="ATP-synt_F1_alpha_C"/>
    <property type="match status" value="1"/>
</dbReference>
<dbReference type="CDD" id="cd18116">
    <property type="entry name" value="ATP-synt_F1_alpha_N"/>
    <property type="match status" value="1"/>
</dbReference>
<dbReference type="CDD" id="cd01132">
    <property type="entry name" value="F1-ATPase_alpha_CD"/>
    <property type="match status" value="1"/>
</dbReference>
<dbReference type="FunFam" id="1.20.150.20:FF:000001">
    <property type="entry name" value="ATP synthase subunit alpha"/>
    <property type="match status" value="1"/>
</dbReference>
<dbReference type="FunFam" id="2.40.30.20:FF:000001">
    <property type="entry name" value="ATP synthase subunit alpha"/>
    <property type="match status" value="1"/>
</dbReference>
<dbReference type="FunFam" id="3.40.50.300:FF:000002">
    <property type="entry name" value="ATP synthase subunit alpha"/>
    <property type="match status" value="1"/>
</dbReference>
<dbReference type="Gene3D" id="2.40.30.20">
    <property type="match status" value="1"/>
</dbReference>
<dbReference type="Gene3D" id="1.20.150.20">
    <property type="entry name" value="ATP synthase alpha/beta chain, C-terminal domain"/>
    <property type="match status" value="1"/>
</dbReference>
<dbReference type="Gene3D" id="3.40.50.300">
    <property type="entry name" value="P-loop containing nucleotide triphosphate hydrolases"/>
    <property type="match status" value="1"/>
</dbReference>
<dbReference type="HAMAP" id="MF_01346">
    <property type="entry name" value="ATP_synth_alpha_bact"/>
    <property type="match status" value="1"/>
</dbReference>
<dbReference type="InterPro" id="IPR023366">
    <property type="entry name" value="ATP_synth_asu-like_sf"/>
</dbReference>
<dbReference type="InterPro" id="IPR000793">
    <property type="entry name" value="ATP_synth_asu_C"/>
</dbReference>
<dbReference type="InterPro" id="IPR038376">
    <property type="entry name" value="ATP_synth_asu_C_sf"/>
</dbReference>
<dbReference type="InterPro" id="IPR033732">
    <property type="entry name" value="ATP_synth_F1_a_nt-bd_dom"/>
</dbReference>
<dbReference type="InterPro" id="IPR005294">
    <property type="entry name" value="ATP_synth_F1_asu"/>
</dbReference>
<dbReference type="InterPro" id="IPR020003">
    <property type="entry name" value="ATPase_a/bsu_AS"/>
</dbReference>
<dbReference type="InterPro" id="IPR004100">
    <property type="entry name" value="ATPase_F1/V1/A1_a/bsu_N"/>
</dbReference>
<dbReference type="InterPro" id="IPR036121">
    <property type="entry name" value="ATPase_F1/V1/A1_a/bsu_N_sf"/>
</dbReference>
<dbReference type="InterPro" id="IPR000194">
    <property type="entry name" value="ATPase_F1/V1/A1_a/bsu_nucl-bd"/>
</dbReference>
<dbReference type="InterPro" id="IPR027417">
    <property type="entry name" value="P-loop_NTPase"/>
</dbReference>
<dbReference type="NCBIfam" id="TIGR00962">
    <property type="entry name" value="atpA"/>
    <property type="match status" value="1"/>
</dbReference>
<dbReference type="NCBIfam" id="NF009884">
    <property type="entry name" value="PRK13343.1"/>
    <property type="match status" value="1"/>
</dbReference>
<dbReference type="PANTHER" id="PTHR48082">
    <property type="entry name" value="ATP SYNTHASE SUBUNIT ALPHA, MITOCHONDRIAL"/>
    <property type="match status" value="1"/>
</dbReference>
<dbReference type="PANTHER" id="PTHR48082:SF2">
    <property type="entry name" value="ATP SYNTHASE SUBUNIT ALPHA, MITOCHONDRIAL"/>
    <property type="match status" value="1"/>
</dbReference>
<dbReference type="Pfam" id="PF00006">
    <property type="entry name" value="ATP-synt_ab"/>
    <property type="match status" value="1"/>
</dbReference>
<dbReference type="Pfam" id="PF00306">
    <property type="entry name" value="ATP-synt_ab_C"/>
    <property type="match status" value="1"/>
</dbReference>
<dbReference type="Pfam" id="PF02874">
    <property type="entry name" value="ATP-synt_ab_N"/>
    <property type="match status" value="1"/>
</dbReference>
<dbReference type="PIRSF" id="PIRSF039088">
    <property type="entry name" value="F_ATPase_subunit_alpha"/>
    <property type="match status" value="1"/>
</dbReference>
<dbReference type="SUPFAM" id="SSF47917">
    <property type="entry name" value="C-terminal domain of alpha and beta subunits of F1 ATP synthase"/>
    <property type="match status" value="1"/>
</dbReference>
<dbReference type="SUPFAM" id="SSF50615">
    <property type="entry name" value="N-terminal domain of alpha and beta subunits of F1 ATP synthase"/>
    <property type="match status" value="1"/>
</dbReference>
<dbReference type="SUPFAM" id="SSF52540">
    <property type="entry name" value="P-loop containing nucleoside triphosphate hydrolases"/>
    <property type="match status" value="1"/>
</dbReference>
<dbReference type="PROSITE" id="PS00152">
    <property type="entry name" value="ATPASE_ALPHA_BETA"/>
    <property type="match status" value="1"/>
</dbReference>
<feature type="chain" id="PRO_0000275172" description="ATP synthase subunit alpha, chloroplastic">
    <location>
        <begin position="1"/>
        <end position="507"/>
    </location>
</feature>
<feature type="binding site" evidence="1">
    <location>
        <begin position="170"/>
        <end position="177"/>
    </location>
    <ligand>
        <name>ATP</name>
        <dbReference type="ChEBI" id="CHEBI:30616"/>
    </ligand>
</feature>
<feature type="site" description="Required for activity" evidence="1">
    <location>
        <position position="363"/>
    </location>
</feature>
<gene>
    <name evidence="1" type="primary">atpA</name>
</gene>
<keyword id="KW-0066">ATP synthesis</keyword>
<keyword id="KW-0067">ATP-binding</keyword>
<keyword id="KW-0139">CF(1)</keyword>
<keyword id="KW-0150">Chloroplast</keyword>
<keyword id="KW-0375">Hydrogen ion transport</keyword>
<keyword id="KW-0406">Ion transport</keyword>
<keyword id="KW-0472">Membrane</keyword>
<keyword id="KW-0547">Nucleotide-binding</keyword>
<keyword id="KW-0934">Plastid</keyword>
<keyword id="KW-0793">Thylakoid</keyword>
<keyword id="KW-1278">Translocase</keyword>
<keyword id="KW-0813">Transport</keyword>
<accession>Q06GS5</accession>